<dbReference type="EC" id="2.5.1.n9" evidence="1"/>
<dbReference type="EMBL" id="FM242711">
    <property type="protein sequence ID" value="CAS05534.1"/>
    <property type="molecule type" value="Genomic_DNA"/>
</dbReference>
<dbReference type="RefSeq" id="WP_003740597.1">
    <property type="nucleotide sequence ID" value="NC_012488.1"/>
</dbReference>
<dbReference type="SMR" id="C1KW59"/>
<dbReference type="KEGG" id="lmc:Lm4b_01774"/>
<dbReference type="HOGENOM" id="CLU_095211_0_0_9"/>
<dbReference type="UniPathway" id="UPA00940"/>
<dbReference type="GO" id="GO:0120536">
    <property type="term" value="F:heptaprenylglyceryl phosphate synthase activity"/>
    <property type="evidence" value="ECO:0007669"/>
    <property type="project" value="RHEA"/>
</dbReference>
<dbReference type="GO" id="GO:0000287">
    <property type="term" value="F:magnesium ion binding"/>
    <property type="evidence" value="ECO:0007669"/>
    <property type="project" value="UniProtKB-UniRule"/>
</dbReference>
<dbReference type="GO" id="GO:0046474">
    <property type="term" value="P:glycerophospholipid biosynthetic process"/>
    <property type="evidence" value="ECO:0007669"/>
    <property type="project" value="UniProtKB-UniRule"/>
</dbReference>
<dbReference type="CDD" id="cd02812">
    <property type="entry name" value="PcrB_like"/>
    <property type="match status" value="1"/>
</dbReference>
<dbReference type="FunFam" id="3.20.20.390:FF:000001">
    <property type="entry name" value="Heptaprenylglyceryl phosphate synthase"/>
    <property type="match status" value="1"/>
</dbReference>
<dbReference type="Gene3D" id="3.20.20.390">
    <property type="entry name" value="FMN-linked oxidoreductases"/>
    <property type="match status" value="1"/>
</dbReference>
<dbReference type="HAMAP" id="MF_00112">
    <property type="entry name" value="GGGP_HepGP_synthase"/>
    <property type="match status" value="1"/>
</dbReference>
<dbReference type="InterPro" id="IPR039074">
    <property type="entry name" value="GGGP/HepGP_synthase_I"/>
</dbReference>
<dbReference type="InterPro" id="IPR038597">
    <property type="entry name" value="GGGP/HepGP_synthase_sf"/>
</dbReference>
<dbReference type="InterPro" id="IPR008205">
    <property type="entry name" value="GGGP_HepGP_synthase"/>
</dbReference>
<dbReference type="NCBIfam" id="TIGR01768">
    <property type="entry name" value="GGGP-family"/>
    <property type="match status" value="1"/>
</dbReference>
<dbReference type="NCBIfam" id="NF003199">
    <property type="entry name" value="PRK04169.1-3"/>
    <property type="match status" value="1"/>
</dbReference>
<dbReference type="PANTHER" id="PTHR40029">
    <property type="match status" value="1"/>
</dbReference>
<dbReference type="PANTHER" id="PTHR40029:SF2">
    <property type="entry name" value="HEPTAPRENYLGLYCERYL PHOSPHATE SYNTHASE"/>
    <property type="match status" value="1"/>
</dbReference>
<dbReference type="Pfam" id="PF01884">
    <property type="entry name" value="PcrB"/>
    <property type="match status" value="1"/>
</dbReference>
<dbReference type="SUPFAM" id="SSF51395">
    <property type="entry name" value="FMN-linked oxidoreductases"/>
    <property type="match status" value="1"/>
</dbReference>
<accession>C1KW59</accession>
<name>PCRB_LISMC</name>
<evidence type="ECO:0000255" key="1">
    <source>
        <dbReference type="HAMAP-Rule" id="MF_00112"/>
    </source>
</evidence>
<gene>
    <name evidence="1" type="primary">pcrB</name>
    <name type="ordered locus">Lm4b_01774</name>
</gene>
<proteinExistence type="inferred from homology"/>
<comment type="function">
    <text evidence="1">Prenyltransferase that catalyzes in vivo the transfer of the heptaprenyl moiety of heptaprenyl pyrophosphate (HepPP; 35 carbon atoms) to the C3 hydroxyl of sn-glycerol-1-phosphate (G1P), producing heptaprenylglyceryl phosphate (HepGP). This reaction is an ether-bond-formation step in the biosynthesis of archaea-type G1P-based membrane lipids found in Bacillales.</text>
</comment>
<comment type="catalytic activity">
    <reaction evidence="1">
        <text>sn-glycerol 1-phosphate + all-trans-heptaprenyl diphosphate = 3-heptaprenyl-sn-glycero-1-phosphate + diphosphate</text>
        <dbReference type="Rhea" id="RHEA:33495"/>
        <dbReference type="ChEBI" id="CHEBI:33019"/>
        <dbReference type="ChEBI" id="CHEBI:57685"/>
        <dbReference type="ChEBI" id="CHEBI:58206"/>
        <dbReference type="ChEBI" id="CHEBI:64781"/>
        <dbReference type="EC" id="2.5.1.n9"/>
    </reaction>
</comment>
<comment type="cofactor">
    <cofactor evidence="1">
        <name>Mg(2+)</name>
        <dbReference type="ChEBI" id="CHEBI:18420"/>
    </cofactor>
</comment>
<comment type="pathway">
    <text evidence="1">Membrane lipid metabolism; glycerophospholipid metabolism.</text>
</comment>
<comment type="subunit">
    <text evidence="1">Homodimer.</text>
</comment>
<comment type="similarity">
    <text evidence="1">Belongs to the GGGP/HepGP synthase family. Group I subfamily.</text>
</comment>
<sequence length="225" mass="25315">MKHLFKLDPAKNLPMNDLTKLVHSGTNGFIIGGTDNVQIEAVQKLYELLGETDLPIFLEISNESMILPEADHFLIPVVLNTENSKWTHGLHQELIKEMGAFIPWKRVTAEGYVILNKDAKVAHLTEAKTDLTDEDIVAYARLAENIFHLPIFYVEYSGMYGDPEVVRKASAALSNTKFWYGGGIRSKEQAAEMVKYADTIIVGNIIYEDLEKALETATIFRKKTV</sequence>
<feature type="chain" id="PRO_1000202940" description="Heptaprenylglyceryl phosphate synthase">
    <location>
        <begin position="1"/>
        <end position="225"/>
    </location>
</feature>
<feature type="binding site" evidence="1">
    <location>
        <position position="6"/>
    </location>
    <ligand>
        <name>sn-glycerol 1-phosphate</name>
        <dbReference type="ChEBI" id="CHEBI:57685"/>
    </ligand>
</feature>
<feature type="binding site" evidence="1">
    <location>
        <position position="8"/>
    </location>
    <ligand>
        <name>Mg(2+)</name>
        <dbReference type="ChEBI" id="CHEBI:18420"/>
    </ligand>
</feature>
<feature type="binding site" evidence="1">
    <location>
        <position position="34"/>
    </location>
    <ligand>
        <name>Mg(2+)</name>
        <dbReference type="ChEBI" id="CHEBI:18420"/>
    </ligand>
</feature>
<feature type="binding site" evidence="1">
    <location>
        <begin position="153"/>
        <end position="158"/>
    </location>
    <ligand>
        <name>sn-glycerol 1-phosphate</name>
        <dbReference type="ChEBI" id="CHEBI:57685"/>
    </ligand>
</feature>
<feature type="binding site" evidence="1">
    <location>
        <position position="183"/>
    </location>
    <ligand>
        <name>sn-glycerol 1-phosphate</name>
        <dbReference type="ChEBI" id="CHEBI:57685"/>
    </ligand>
</feature>
<feature type="binding site" evidence="1">
    <location>
        <begin position="203"/>
        <end position="204"/>
    </location>
    <ligand>
        <name>sn-glycerol 1-phosphate</name>
        <dbReference type="ChEBI" id="CHEBI:57685"/>
    </ligand>
</feature>
<keyword id="KW-0444">Lipid biosynthesis</keyword>
<keyword id="KW-0443">Lipid metabolism</keyword>
<keyword id="KW-0460">Magnesium</keyword>
<keyword id="KW-0479">Metal-binding</keyword>
<keyword id="KW-0594">Phospholipid biosynthesis</keyword>
<keyword id="KW-1208">Phospholipid metabolism</keyword>
<keyword id="KW-0808">Transferase</keyword>
<reference key="1">
    <citation type="journal article" date="2012" name="BMC Genomics">
        <title>Comparative genomics and transcriptomics of lineages I, II, and III strains of Listeria monocytogenes.</title>
        <authorList>
            <person name="Hain T."/>
            <person name="Ghai R."/>
            <person name="Billion A."/>
            <person name="Kuenne C.T."/>
            <person name="Steinweg C."/>
            <person name="Izar B."/>
            <person name="Mohamed W."/>
            <person name="Mraheil M."/>
            <person name="Domann E."/>
            <person name="Schaffrath S."/>
            <person name="Karst U."/>
            <person name="Goesmann A."/>
            <person name="Oehm S."/>
            <person name="Puhler A."/>
            <person name="Merkl R."/>
            <person name="Vorwerk S."/>
            <person name="Glaser P."/>
            <person name="Garrido P."/>
            <person name="Rusniok C."/>
            <person name="Buchrieser C."/>
            <person name="Goebel W."/>
            <person name="Chakraborty T."/>
        </authorList>
    </citation>
    <scope>NUCLEOTIDE SEQUENCE [LARGE SCALE GENOMIC DNA]</scope>
    <source>
        <strain>CLIP80459</strain>
    </source>
</reference>
<protein>
    <recommendedName>
        <fullName evidence="1">Heptaprenylglyceryl phosphate synthase</fullName>
        <shortName evidence="1">HepGP synthase</shortName>
        <ecNumber evidence="1">2.5.1.n9</ecNumber>
    </recommendedName>
    <alternativeName>
        <fullName evidence="1">Glycerol-1-phosphate heptaprenyltransferase</fullName>
    </alternativeName>
</protein>
<organism>
    <name type="scientific">Listeria monocytogenes serotype 4b (strain CLIP80459)</name>
    <dbReference type="NCBI Taxonomy" id="568819"/>
    <lineage>
        <taxon>Bacteria</taxon>
        <taxon>Bacillati</taxon>
        <taxon>Bacillota</taxon>
        <taxon>Bacilli</taxon>
        <taxon>Bacillales</taxon>
        <taxon>Listeriaceae</taxon>
        <taxon>Listeria</taxon>
    </lineage>
</organism>